<proteinExistence type="evidence at transcript level"/>
<feature type="chain" id="PRO_0000103767" description="Uncharacterized protein Rv0970">
    <location>
        <begin position="1"/>
        <end position="210"/>
    </location>
</feature>
<feature type="transmembrane region" description="Helical" evidence="1">
    <location>
        <begin position="9"/>
        <end position="29"/>
    </location>
</feature>
<feature type="transmembrane region" description="Helical" evidence="1">
    <location>
        <begin position="35"/>
        <end position="55"/>
    </location>
</feature>
<feature type="transmembrane region" description="Helical" evidence="1">
    <location>
        <begin position="64"/>
        <end position="84"/>
    </location>
</feature>
<feature type="transmembrane region" description="Helical" evidence="1">
    <location>
        <begin position="91"/>
        <end position="111"/>
    </location>
</feature>
<feature type="transmembrane region" description="Helical" evidence="1">
    <location>
        <begin position="149"/>
        <end position="169"/>
    </location>
</feature>
<feature type="transmembrane region" description="Helical" evidence="1">
    <location>
        <begin position="190"/>
        <end position="210"/>
    </location>
</feature>
<reference key="1">
    <citation type="journal article" date="1998" name="Nature">
        <title>Deciphering the biology of Mycobacterium tuberculosis from the complete genome sequence.</title>
        <authorList>
            <person name="Cole S.T."/>
            <person name="Brosch R."/>
            <person name="Parkhill J."/>
            <person name="Garnier T."/>
            <person name="Churcher C.M."/>
            <person name="Harris D.E."/>
            <person name="Gordon S.V."/>
            <person name="Eiglmeier K."/>
            <person name="Gas S."/>
            <person name="Barry C.E. III"/>
            <person name="Tekaia F."/>
            <person name="Badcock K."/>
            <person name="Basham D."/>
            <person name="Brown D."/>
            <person name="Chillingworth T."/>
            <person name="Connor R."/>
            <person name="Davies R.M."/>
            <person name="Devlin K."/>
            <person name="Feltwell T."/>
            <person name="Gentles S."/>
            <person name="Hamlin N."/>
            <person name="Holroyd S."/>
            <person name="Hornsby T."/>
            <person name="Jagels K."/>
            <person name="Krogh A."/>
            <person name="McLean J."/>
            <person name="Moule S."/>
            <person name="Murphy L.D."/>
            <person name="Oliver S."/>
            <person name="Osborne J."/>
            <person name="Quail M.A."/>
            <person name="Rajandream M.A."/>
            <person name="Rogers J."/>
            <person name="Rutter S."/>
            <person name="Seeger K."/>
            <person name="Skelton S."/>
            <person name="Squares S."/>
            <person name="Squares R."/>
            <person name="Sulston J.E."/>
            <person name="Taylor K."/>
            <person name="Whitehead S."/>
            <person name="Barrell B.G."/>
        </authorList>
    </citation>
    <scope>NUCLEOTIDE SEQUENCE [LARGE SCALE GENOMIC DNA]</scope>
    <source>
        <strain>ATCC 25618 / H37Rv</strain>
    </source>
</reference>
<reference key="2">
    <citation type="journal article" date="2006" name="J. Infect. Dis.">
        <title>Mycobacterium tuberculosis invasion and traversal across an in vitro human blood-brain barrier as a pathogenic mechanism for central nervous system tuberculosis.</title>
        <authorList>
            <person name="Jain S.K."/>
            <person name="Paul-Satyaseela M."/>
            <person name="Lamichhane G."/>
            <person name="Kim K.S."/>
            <person name="Bishai W.R."/>
        </authorList>
    </citation>
    <scope>INDUCTION</scope>
    <source>
        <strain>ATCC 25618 / H37Rv</strain>
    </source>
</reference>
<evidence type="ECO:0000255" key="1"/>
<evidence type="ECO:0000269" key="2">
    <source>
    </source>
</evidence>
<evidence type="ECO:0000305" key="3"/>
<name>Y970_MYCTU</name>
<gene>
    <name type="ordered locus">Rv0970</name>
    <name type="ORF">MTCY10D7.04c</name>
</gene>
<comment type="subcellular location">
    <subcellularLocation>
        <location evidence="3">Cell membrane</location>
        <topology evidence="3">Multi-pass membrane protein</topology>
    </subcellularLocation>
</comment>
<comment type="induction">
    <text evidence="2">Highly up-regulated during the early stages of invasion of the human blood-brain barrier.</text>
</comment>
<keyword id="KW-1003">Cell membrane</keyword>
<keyword id="KW-0472">Membrane</keyword>
<keyword id="KW-1185">Reference proteome</keyword>
<keyword id="KW-0812">Transmembrane</keyword>
<keyword id="KW-1133">Transmembrane helix</keyword>
<sequence length="210" mass="22887">MIHDLMLRWVVTGLFVLTAAECGLAIIAKRRPWTLIVNHGLHFAMAVAMAVMAWPWGARVPTTGPAVFFLLAAVWFGATAVVAVRGTATRGLYGYHGLMMLATAWMYAAMNPRLLPVRSCTEYATEPDGSMPAMDMTAMNMPPNSGSPIWFSAVNWIGTVGFAVAAVFWACRFVMERRQEATQSRLPGSIGQAMMAAGMAMLFFAMLFPV</sequence>
<organism>
    <name type="scientific">Mycobacterium tuberculosis (strain ATCC 25618 / H37Rv)</name>
    <dbReference type="NCBI Taxonomy" id="83332"/>
    <lineage>
        <taxon>Bacteria</taxon>
        <taxon>Bacillati</taxon>
        <taxon>Actinomycetota</taxon>
        <taxon>Actinomycetes</taxon>
        <taxon>Mycobacteriales</taxon>
        <taxon>Mycobacteriaceae</taxon>
        <taxon>Mycobacterium</taxon>
        <taxon>Mycobacterium tuberculosis complex</taxon>
    </lineage>
</organism>
<protein>
    <recommendedName>
        <fullName>Uncharacterized protein Rv0970</fullName>
    </recommendedName>
</protein>
<dbReference type="EMBL" id="AL123456">
    <property type="protein sequence ID" value="CCP43719.1"/>
    <property type="molecule type" value="Genomic_DNA"/>
</dbReference>
<dbReference type="PIR" id="H70718">
    <property type="entry name" value="H70718"/>
</dbReference>
<dbReference type="RefSeq" id="NP_215485.1">
    <property type="nucleotide sequence ID" value="NC_000962.3"/>
</dbReference>
<dbReference type="RefSeq" id="WP_003898666.1">
    <property type="nucleotide sequence ID" value="NZ_NVQJ01000001.1"/>
</dbReference>
<dbReference type="STRING" id="83332.Rv0970"/>
<dbReference type="PaxDb" id="83332-Rv0970"/>
<dbReference type="DNASU" id="885242"/>
<dbReference type="GeneID" id="885242"/>
<dbReference type="KEGG" id="mtu:Rv0970"/>
<dbReference type="KEGG" id="mtv:RVBD_0970"/>
<dbReference type="TubercuList" id="Rv0970"/>
<dbReference type="eggNOG" id="ENOG50334C0">
    <property type="taxonomic scope" value="Bacteria"/>
</dbReference>
<dbReference type="InParanoid" id="P9WKL7"/>
<dbReference type="OrthoDB" id="4734452at2"/>
<dbReference type="Proteomes" id="UP000001584">
    <property type="component" value="Chromosome"/>
</dbReference>
<dbReference type="GO" id="GO:0005886">
    <property type="term" value="C:plasma membrane"/>
    <property type="evidence" value="ECO:0007669"/>
    <property type="project" value="UniProtKB-SubCell"/>
</dbReference>
<dbReference type="InterPro" id="IPR033458">
    <property type="entry name" value="DUF5134"/>
</dbReference>
<dbReference type="Pfam" id="PF17197">
    <property type="entry name" value="DUF5134"/>
    <property type="match status" value="1"/>
</dbReference>
<accession>P9WKL7</accession>
<accession>L0T6Y4</accession>
<accession>P64781</accession>
<accession>P71541</accession>